<comment type="function">
    <text evidence="1">The UvrABC repair system catalyzes the recognition and processing of DNA lesions. UvrA is an ATPase and a DNA-binding protein. A damage recognition complex composed of 2 UvrA and 2 UvrB subunits scans DNA for abnormalities. When the presence of a lesion has been verified by UvrB, the UvrA molecules dissociate (By similarity).</text>
</comment>
<comment type="subunit">
    <text evidence="1">Forms a heterotetramer with UvrB during the search for lesions.</text>
</comment>
<comment type="subcellular location">
    <subcellularLocation>
        <location evidence="1">Cytoplasm</location>
    </subcellularLocation>
</comment>
<comment type="similarity">
    <text evidence="3">Belongs to the ABC transporter superfamily. UvrA family.</text>
</comment>
<accession>P28009</accession>
<evidence type="ECO:0000250" key="1"/>
<evidence type="ECO:0000255" key="2">
    <source>
        <dbReference type="PROSITE-ProRule" id="PRU00434"/>
    </source>
</evidence>
<evidence type="ECO:0000305" key="3"/>
<gene>
    <name type="primary">uvrA</name>
    <name type="synonym">nurA</name>
</gene>
<feature type="chain" id="PRO_0000093077" description="UvrABC system protein A">
    <location>
        <begin position="1"/>
        <end position="118" status="greater than"/>
    </location>
</feature>
<feature type="binding site" evidence="2">
    <location>
        <begin position="31"/>
        <end position="38"/>
    </location>
    <ligand>
        <name>ATP</name>
        <dbReference type="ChEBI" id="CHEBI:30616"/>
    </ligand>
</feature>
<feature type="non-terminal residue">
    <location>
        <position position="118"/>
    </location>
</feature>
<keyword id="KW-0067">ATP-binding</keyword>
<keyword id="KW-0963">Cytoplasm</keyword>
<keyword id="KW-0227">DNA damage</keyword>
<keyword id="KW-0228">DNA excision</keyword>
<keyword id="KW-0234">DNA repair</keyword>
<keyword id="KW-0238">DNA-binding</keyword>
<keyword id="KW-0267">Excision nuclease</keyword>
<keyword id="KW-0547">Nucleotide-binding</keyword>
<keyword id="KW-0677">Repeat</keyword>
<keyword id="KW-0742">SOS response</keyword>
<organism>
    <name type="scientific">Proteus mirabilis</name>
    <dbReference type="NCBI Taxonomy" id="584"/>
    <lineage>
        <taxon>Bacteria</taxon>
        <taxon>Pseudomonadati</taxon>
        <taxon>Pseudomonadota</taxon>
        <taxon>Gammaproteobacteria</taxon>
        <taxon>Enterobacterales</taxon>
        <taxon>Morganellaceae</taxon>
        <taxon>Proteus</taxon>
    </lineage>
</organism>
<proteinExistence type="inferred from homology"/>
<protein>
    <recommendedName>
        <fullName>UvrABC system protein A</fullName>
        <shortName>UvrA protein</shortName>
    </recommendedName>
    <alternativeName>
        <fullName>Excinuclease ABC subunit A</fullName>
    </alternativeName>
</protein>
<sequence length="118" mass="13151">MDKIEVRGARTHNLKNINLVIPRDKLIVITGLSGSGKSSLAFDTLYAEGQRRYVESLSAYARQFLSLMEKPDVDHIEGLSPAISIEQKSTSHNPRSTVGTITEIHDYLRLLFARVGEP</sequence>
<reference key="1">
    <citation type="journal article" date="1994" name="Microbiology">
        <title>Cloning and sequencing of the Proteus mirabilis gene for a single-stranded DNA-binding protein (SSB) and complementation of Escherichia coli ssb point and deletion mutations.</title>
        <authorList>
            <person name="de Vries J."/>
            <person name="Wackernagel W."/>
        </authorList>
    </citation>
    <scope>NUCLEOTIDE SEQUENCE [GENOMIC DNA]</scope>
    <source>
        <strain>PG1300</strain>
    </source>
</reference>
<name>UVRA_PROMI</name>
<dbReference type="EMBL" id="X65079">
    <property type="protein sequence ID" value="CAA46205.1"/>
    <property type="molecule type" value="Genomic_DNA"/>
</dbReference>
<dbReference type="PIR" id="S19954">
    <property type="entry name" value="S19954"/>
</dbReference>
<dbReference type="SMR" id="P28009"/>
<dbReference type="STRING" id="584.AOUC001_01760"/>
<dbReference type="GO" id="GO:0005737">
    <property type="term" value="C:cytoplasm"/>
    <property type="evidence" value="ECO:0007669"/>
    <property type="project" value="UniProtKB-SubCell"/>
</dbReference>
<dbReference type="GO" id="GO:0005524">
    <property type="term" value="F:ATP binding"/>
    <property type="evidence" value="ECO:0007669"/>
    <property type="project" value="UniProtKB-KW"/>
</dbReference>
<dbReference type="GO" id="GO:0003677">
    <property type="term" value="F:DNA binding"/>
    <property type="evidence" value="ECO:0007669"/>
    <property type="project" value="UniProtKB-KW"/>
</dbReference>
<dbReference type="GO" id="GO:0004518">
    <property type="term" value="F:nuclease activity"/>
    <property type="evidence" value="ECO:0007669"/>
    <property type="project" value="UniProtKB-KW"/>
</dbReference>
<dbReference type="GO" id="GO:0006281">
    <property type="term" value="P:DNA repair"/>
    <property type="evidence" value="ECO:0007669"/>
    <property type="project" value="UniProtKB-KW"/>
</dbReference>
<dbReference type="GO" id="GO:0009432">
    <property type="term" value="P:SOS response"/>
    <property type="evidence" value="ECO:0007669"/>
    <property type="project" value="UniProtKB-KW"/>
</dbReference>
<dbReference type="FunFam" id="3.40.50.300:FF:000028">
    <property type="entry name" value="UvrABC system protein A"/>
    <property type="match status" value="1"/>
</dbReference>
<dbReference type="Gene3D" id="1.20.1580.10">
    <property type="entry name" value="ABC transporter ATPase like domain"/>
    <property type="match status" value="1"/>
</dbReference>
<dbReference type="Gene3D" id="3.40.50.300">
    <property type="entry name" value="P-loop containing nucleotide triphosphate hydrolases"/>
    <property type="match status" value="1"/>
</dbReference>
<dbReference type="InterPro" id="IPR027417">
    <property type="entry name" value="P-loop_NTPase"/>
</dbReference>
<dbReference type="PANTHER" id="PTHR43152">
    <property type="entry name" value="UVRABC SYSTEM PROTEIN A"/>
    <property type="match status" value="1"/>
</dbReference>
<dbReference type="PANTHER" id="PTHR43152:SF3">
    <property type="entry name" value="UVRABC SYSTEM PROTEIN A"/>
    <property type="match status" value="1"/>
</dbReference>
<dbReference type="SUPFAM" id="SSF52540">
    <property type="entry name" value="P-loop containing nucleoside triphosphate hydrolases"/>
    <property type="match status" value="1"/>
</dbReference>